<accession>A1SF29</accession>
<protein>
    <recommendedName>
        <fullName evidence="1">Phosphoglucosamine mutase</fullName>
        <ecNumber evidence="1">5.4.2.10</ecNumber>
    </recommendedName>
</protein>
<organism>
    <name type="scientific">Nocardioides sp. (strain ATCC BAA-499 / JS614)</name>
    <dbReference type="NCBI Taxonomy" id="196162"/>
    <lineage>
        <taxon>Bacteria</taxon>
        <taxon>Bacillati</taxon>
        <taxon>Actinomycetota</taxon>
        <taxon>Actinomycetes</taxon>
        <taxon>Propionibacteriales</taxon>
        <taxon>Nocardioidaceae</taxon>
        <taxon>Nocardioides</taxon>
    </lineage>
</organism>
<name>GLMM_NOCSJ</name>
<feature type="chain" id="PRO_0000301350" description="Phosphoglucosamine mutase">
    <location>
        <begin position="1"/>
        <end position="448"/>
    </location>
</feature>
<feature type="active site" description="Phosphoserine intermediate" evidence="1">
    <location>
        <position position="104"/>
    </location>
</feature>
<feature type="binding site" description="via phosphate group" evidence="1">
    <location>
        <position position="104"/>
    </location>
    <ligand>
        <name>Mg(2+)</name>
        <dbReference type="ChEBI" id="CHEBI:18420"/>
    </ligand>
</feature>
<feature type="binding site" evidence="1">
    <location>
        <position position="241"/>
    </location>
    <ligand>
        <name>Mg(2+)</name>
        <dbReference type="ChEBI" id="CHEBI:18420"/>
    </ligand>
</feature>
<feature type="binding site" evidence="1">
    <location>
        <position position="243"/>
    </location>
    <ligand>
        <name>Mg(2+)</name>
        <dbReference type="ChEBI" id="CHEBI:18420"/>
    </ligand>
</feature>
<feature type="binding site" evidence="1">
    <location>
        <position position="245"/>
    </location>
    <ligand>
        <name>Mg(2+)</name>
        <dbReference type="ChEBI" id="CHEBI:18420"/>
    </ligand>
</feature>
<feature type="modified residue" description="Phosphoserine" evidence="1">
    <location>
        <position position="104"/>
    </location>
</feature>
<reference key="1">
    <citation type="submission" date="2006-12" db="EMBL/GenBank/DDBJ databases">
        <title>Complete sequence of chromosome 1 of Nocardioides sp. JS614.</title>
        <authorList>
            <person name="Copeland A."/>
            <person name="Lucas S."/>
            <person name="Lapidus A."/>
            <person name="Barry K."/>
            <person name="Detter J.C."/>
            <person name="Glavina del Rio T."/>
            <person name="Hammon N."/>
            <person name="Israni S."/>
            <person name="Dalin E."/>
            <person name="Tice H."/>
            <person name="Pitluck S."/>
            <person name="Thompson L.S."/>
            <person name="Brettin T."/>
            <person name="Bruce D."/>
            <person name="Han C."/>
            <person name="Tapia R."/>
            <person name="Schmutz J."/>
            <person name="Larimer F."/>
            <person name="Land M."/>
            <person name="Hauser L."/>
            <person name="Kyrpides N."/>
            <person name="Kim E."/>
            <person name="Mattes T."/>
            <person name="Gossett J."/>
            <person name="Richardson P."/>
        </authorList>
    </citation>
    <scope>NUCLEOTIDE SEQUENCE [LARGE SCALE GENOMIC DNA]</scope>
    <source>
        <strain>ATCC BAA-499 / JS614</strain>
    </source>
</reference>
<keyword id="KW-0413">Isomerase</keyword>
<keyword id="KW-0460">Magnesium</keyword>
<keyword id="KW-0479">Metal-binding</keyword>
<keyword id="KW-0597">Phosphoprotein</keyword>
<keyword id="KW-1185">Reference proteome</keyword>
<comment type="function">
    <text evidence="1">Catalyzes the conversion of glucosamine-6-phosphate to glucosamine-1-phosphate.</text>
</comment>
<comment type="catalytic activity">
    <reaction evidence="1">
        <text>alpha-D-glucosamine 1-phosphate = D-glucosamine 6-phosphate</text>
        <dbReference type="Rhea" id="RHEA:23424"/>
        <dbReference type="ChEBI" id="CHEBI:58516"/>
        <dbReference type="ChEBI" id="CHEBI:58725"/>
        <dbReference type="EC" id="5.4.2.10"/>
    </reaction>
</comment>
<comment type="cofactor">
    <cofactor evidence="1">
        <name>Mg(2+)</name>
        <dbReference type="ChEBI" id="CHEBI:18420"/>
    </cofactor>
    <text evidence="1">Binds 1 Mg(2+) ion per subunit.</text>
</comment>
<comment type="PTM">
    <text evidence="1">Activated by phosphorylation.</text>
</comment>
<comment type="similarity">
    <text evidence="1">Belongs to the phosphohexose mutase family.</text>
</comment>
<evidence type="ECO:0000255" key="1">
    <source>
        <dbReference type="HAMAP-Rule" id="MF_01554"/>
    </source>
</evidence>
<proteinExistence type="inferred from homology"/>
<gene>
    <name evidence="1" type="primary">glmM</name>
    <name type="ordered locus">Noca_0891</name>
</gene>
<sequence length="448" mass="46469">MTRIFGTDGVRGLANGQLTAELALDLSVAAARVLADRGEFKGHRPLAVVGRDTRISGQFLEHAVVAGLASAGVDVLRLRVLPTPAVAYLTEALGADLGVVISASHNPMPDNGIKFLARGGHKLDDAVEKLIEQHLAEEWDRPVGGDVGRVTPYATPVEEYVAHLVGTLTRSLDGIKVVLDCAHGAAYEAGPRALRAAGAEVVAIAVEPDGLNINADCGSTHLAALQAAVVEHGADVGFALDGDADRCLAVDHEGNAVDGDQILAILALGMAETGHLAKNTVVATVMSNLGFVQAMRAAGVGVRQTKVGDRYVLEAMRVSGYSLGGEQSGHVIMSEHATTGDGILTALHVLQRMAATGQSLQSLASVVTRLPQVLVNVPDVDKSRADDDAVLAAAIAEEEAALGDSGRVLLRPSGTEQLVRVMVEAATQEEAVSVAGRLADVVKRQLAL</sequence>
<dbReference type="EC" id="5.4.2.10" evidence="1"/>
<dbReference type="EMBL" id="CP000509">
    <property type="protein sequence ID" value="ABL80414.1"/>
    <property type="molecule type" value="Genomic_DNA"/>
</dbReference>
<dbReference type="RefSeq" id="WP_011754363.1">
    <property type="nucleotide sequence ID" value="NC_008699.1"/>
</dbReference>
<dbReference type="SMR" id="A1SF29"/>
<dbReference type="STRING" id="196162.Noca_0891"/>
<dbReference type="KEGG" id="nca:Noca_0891"/>
<dbReference type="eggNOG" id="COG1109">
    <property type="taxonomic scope" value="Bacteria"/>
</dbReference>
<dbReference type="HOGENOM" id="CLU_016950_7_0_11"/>
<dbReference type="OrthoDB" id="9803322at2"/>
<dbReference type="Proteomes" id="UP000000640">
    <property type="component" value="Chromosome"/>
</dbReference>
<dbReference type="GO" id="GO:0005829">
    <property type="term" value="C:cytosol"/>
    <property type="evidence" value="ECO:0007669"/>
    <property type="project" value="TreeGrafter"/>
</dbReference>
<dbReference type="GO" id="GO:0000287">
    <property type="term" value="F:magnesium ion binding"/>
    <property type="evidence" value="ECO:0007669"/>
    <property type="project" value="UniProtKB-UniRule"/>
</dbReference>
<dbReference type="GO" id="GO:0008966">
    <property type="term" value="F:phosphoglucosamine mutase activity"/>
    <property type="evidence" value="ECO:0007669"/>
    <property type="project" value="UniProtKB-UniRule"/>
</dbReference>
<dbReference type="GO" id="GO:0004615">
    <property type="term" value="F:phosphomannomutase activity"/>
    <property type="evidence" value="ECO:0007669"/>
    <property type="project" value="TreeGrafter"/>
</dbReference>
<dbReference type="GO" id="GO:0005975">
    <property type="term" value="P:carbohydrate metabolic process"/>
    <property type="evidence" value="ECO:0007669"/>
    <property type="project" value="InterPro"/>
</dbReference>
<dbReference type="GO" id="GO:0009252">
    <property type="term" value="P:peptidoglycan biosynthetic process"/>
    <property type="evidence" value="ECO:0007669"/>
    <property type="project" value="TreeGrafter"/>
</dbReference>
<dbReference type="GO" id="GO:0006048">
    <property type="term" value="P:UDP-N-acetylglucosamine biosynthetic process"/>
    <property type="evidence" value="ECO:0007669"/>
    <property type="project" value="TreeGrafter"/>
</dbReference>
<dbReference type="CDD" id="cd05802">
    <property type="entry name" value="GlmM"/>
    <property type="match status" value="1"/>
</dbReference>
<dbReference type="FunFam" id="3.30.310.50:FF:000001">
    <property type="entry name" value="Phosphoglucosamine mutase"/>
    <property type="match status" value="1"/>
</dbReference>
<dbReference type="FunFam" id="3.40.120.10:FF:000001">
    <property type="entry name" value="Phosphoglucosamine mutase"/>
    <property type="match status" value="1"/>
</dbReference>
<dbReference type="FunFam" id="3.40.120.10:FF:000002">
    <property type="entry name" value="Phosphoglucosamine mutase"/>
    <property type="match status" value="1"/>
</dbReference>
<dbReference type="Gene3D" id="3.40.120.10">
    <property type="entry name" value="Alpha-D-Glucose-1,6-Bisphosphate, subunit A, domain 3"/>
    <property type="match status" value="3"/>
</dbReference>
<dbReference type="Gene3D" id="3.30.310.50">
    <property type="entry name" value="Alpha-D-phosphohexomutase, C-terminal domain"/>
    <property type="match status" value="1"/>
</dbReference>
<dbReference type="HAMAP" id="MF_01554_B">
    <property type="entry name" value="GlmM_B"/>
    <property type="match status" value="1"/>
</dbReference>
<dbReference type="InterPro" id="IPR005844">
    <property type="entry name" value="A-D-PHexomutase_a/b/a-I"/>
</dbReference>
<dbReference type="InterPro" id="IPR016055">
    <property type="entry name" value="A-D-PHexomutase_a/b/a-I/II/III"/>
</dbReference>
<dbReference type="InterPro" id="IPR005845">
    <property type="entry name" value="A-D-PHexomutase_a/b/a-II"/>
</dbReference>
<dbReference type="InterPro" id="IPR005846">
    <property type="entry name" value="A-D-PHexomutase_a/b/a-III"/>
</dbReference>
<dbReference type="InterPro" id="IPR005843">
    <property type="entry name" value="A-D-PHexomutase_C"/>
</dbReference>
<dbReference type="InterPro" id="IPR036900">
    <property type="entry name" value="A-D-PHexomutase_C_sf"/>
</dbReference>
<dbReference type="InterPro" id="IPR016066">
    <property type="entry name" value="A-D-PHexomutase_CS"/>
</dbReference>
<dbReference type="InterPro" id="IPR005841">
    <property type="entry name" value="Alpha-D-phosphohexomutase_SF"/>
</dbReference>
<dbReference type="InterPro" id="IPR006352">
    <property type="entry name" value="GlmM_bact"/>
</dbReference>
<dbReference type="InterPro" id="IPR050060">
    <property type="entry name" value="Phosphoglucosamine_mutase"/>
</dbReference>
<dbReference type="NCBIfam" id="TIGR01455">
    <property type="entry name" value="glmM"/>
    <property type="match status" value="1"/>
</dbReference>
<dbReference type="NCBIfam" id="NF008139">
    <property type="entry name" value="PRK10887.1"/>
    <property type="match status" value="1"/>
</dbReference>
<dbReference type="PANTHER" id="PTHR42946:SF1">
    <property type="entry name" value="PHOSPHOGLUCOMUTASE (ALPHA-D-GLUCOSE-1,6-BISPHOSPHATE-DEPENDENT)"/>
    <property type="match status" value="1"/>
</dbReference>
<dbReference type="PANTHER" id="PTHR42946">
    <property type="entry name" value="PHOSPHOHEXOSE MUTASE"/>
    <property type="match status" value="1"/>
</dbReference>
<dbReference type="Pfam" id="PF02878">
    <property type="entry name" value="PGM_PMM_I"/>
    <property type="match status" value="1"/>
</dbReference>
<dbReference type="Pfam" id="PF02879">
    <property type="entry name" value="PGM_PMM_II"/>
    <property type="match status" value="1"/>
</dbReference>
<dbReference type="Pfam" id="PF02880">
    <property type="entry name" value="PGM_PMM_III"/>
    <property type="match status" value="1"/>
</dbReference>
<dbReference type="Pfam" id="PF00408">
    <property type="entry name" value="PGM_PMM_IV"/>
    <property type="match status" value="1"/>
</dbReference>
<dbReference type="PRINTS" id="PR00509">
    <property type="entry name" value="PGMPMM"/>
</dbReference>
<dbReference type="SUPFAM" id="SSF55957">
    <property type="entry name" value="Phosphoglucomutase, C-terminal domain"/>
    <property type="match status" value="1"/>
</dbReference>
<dbReference type="SUPFAM" id="SSF53738">
    <property type="entry name" value="Phosphoglucomutase, first 3 domains"/>
    <property type="match status" value="3"/>
</dbReference>
<dbReference type="PROSITE" id="PS00710">
    <property type="entry name" value="PGM_PMM"/>
    <property type="match status" value="1"/>
</dbReference>